<proteinExistence type="inferred from homology"/>
<feature type="chain" id="PRO_0000339930" description="Photosystem II protein D1 1" evidence="1">
    <location>
        <begin position="1"/>
        <end position="344"/>
    </location>
</feature>
<feature type="propeptide" id="PRO_0000339931" evidence="1">
    <location>
        <begin position="345"/>
        <end position="360"/>
    </location>
</feature>
<feature type="transmembrane region" description="Helical" evidence="1">
    <location>
        <begin position="29"/>
        <end position="46"/>
    </location>
</feature>
<feature type="transmembrane region" description="Helical" evidence="1">
    <location>
        <begin position="118"/>
        <end position="133"/>
    </location>
</feature>
<feature type="transmembrane region" description="Helical" evidence="1">
    <location>
        <begin position="142"/>
        <end position="156"/>
    </location>
</feature>
<feature type="transmembrane region" description="Helical" evidence="1">
    <location>
        <begin position="197"/>
        <end position="218"/>
    </location>
</feature>
<feature type="transmembrane region" description="Helical" evidence="1">
    <location>
        <begin position="274"/>
        <end position="288"/>
    </location>
</feature>
<feature type="binding site" description="axial binding residue" evidence="1">
    <location>
        <position position="118"/>
    </location>
    <ligand>
        <name>chlorophyll a</name>
        <dbReference type="ChEBI" id="CHEBI:58416"/>
        <label>ChlzD1</label>
    </ligand>
    <ligandPart>
        <name>Mg</name>
        <dbReference type="ChEBI" id="CHEBI:25107"/>
    </ligandPart>
</feature>
<feature type="binding site" evidence="1">
    <location>
        <position position="126"/>
    </location>
    <ligand>
        <name>pheophytin a</name>
        <dbReference type="ChEBI" id="CHEBI:136840"/>
        <label>D1</label>
    </ligand>
</feature>
<feature type="binding site" evidence="1">
    <location>
        <position position="170"/>
    </location>
    <ligand>
        <name>[CaMn4O5] cluster</name>
        <dbReference type="ChEBI" id="CHEBI:189552"/>
    </ligand>
</feature>
<feature type="binding site" evidence="1">
    <location>
        <position position="189"/>
    </location>
    <ligand>
        <name>[CaMn4O5] cluster</name>
        <dbReference type="ChEBI" id="CHEBI:189552"/>
    </ligand>
</feature>
<feature type="binding site" description="axial binding residue" evidence="1">
    <location>
        <position position="198"/>
    </location>
    <ligand>
        <name>chlorophyll a</name>
        <dbReference type="ChEBI" id="CHEBI:58416"/>
        <label>PD1</label>
    </ligand>
    <ligandPart>
        <name>Mg</name>
        <dbReference type="ChEBI" id="CHEBI:25107"/>
    </ligandPart>
</feature>
<feature type="binding site" evidence="1">
    <location>
        <position position="215"/>
    </location>
    <ligand>
        <name>a quinone</name>
        <dbReference type="ChEBI" id="CHEBI:132124"/>
        <label>B</label>
    </ligand>
</feature>
<feature type="binding site" evidence="1">
    <location>
        <position position="215"/>
    </location>
    <ligand>
        <name>Fe cation</name>
        <dbReference type="ChEBI" id="CHEBI:24875"/>
        <note>ligand shared with heterodimeric partner</note>
    </ligand>
</feature>
<feature type="binding site" evidence="1">
    <location>
        <begin position="264"/>
        <end position="265"/>
    </location>
    <ligand>
        <name>a quinone</name>
        <dbReference type="ChEBI" id="CHEBI:132124"/>
        <label>B</label>
    </ligand>
</feature>
<feature type="binding site" evidence="1">
    <location>
        <position position="272"/>
    </location>
    <ligand>
        <name>Fe cation</name>
        <dbReference type="ChEBI" id="CHEBI:24875"/>
        <note>ligand shared with heterodimeric partner</note>
    </ligand>
</feature>
<feature type="binding site" evidence="1">
    <location>
        <position position="332"/>
    </location>
    <ligand>
        <name>[CaMn4O5] cluster</name>
        <dbReference type="ChEBI" id="CHEBI:189552"/>
    </ligand>
</feature>
<feature type="binding site" evidence="1">
    <location>
        <position position="333"/>
    </location>
    <ligand>
        <name>[CaMn4O5] cluster</name>
        <dbReference type="ChEBI" id="CHEBI:189552"/>
    </ligand>
</feature>
<feature type="binding site" evidence="1">
    <location>
        <position position="342"/>
    </location>
    <ligand>
        <name>[CaMn4O5] cluster</name>
        <dbReference type="ChEBI" id="CHEBI:189552"/>
    </ligand>
</feature>
<feature type="binding site" evidence="1">
    <location>
        <position position="344"/>
    </location>
    <ligand>
        <name>[CaMn4O5] cluster</name>
        <dbReference type="ChEBI" id="CHEBI:189552"/>
    </ligand>
</feature>
<feature type="site" description="Tyrosine radical intermediate" evidence="1">
    <location>
        <position position="161"/>
    </location>
</feature>
<feature type="site" description="Stabilizes free radical intermediate" evidence="1">
    <location>
        <position position="190"/>
    </location>
</feature>
<feature type="site" description="Cleavage; by CtpA" evidence="1">
    <location>
        <begin position="344"/>
        <end position="345"/>
    </location>
</feature>
<reference key="1">
    <citation type="submission" date="2008-02" db="EMBL/GenBank/DDBJ databases">
        <title>Complete sequence of Synechococcus sp. PCC 7002.</title>
        <authorList>
            <person name="Li T."/>
            <person name="Zhao J."/>
            <person name="Zhao C."/>
            <person name="Liu Z."/>
            <person name="Zhao F."/>
            <person name="Marquardt J."/>
            <person name="Nomura C.T."/>
            <person name="Persson S."/>
            <person name="Detter J.C."/>
            <person name="Richardson P.M."/>
            <person name="Lanz C."/>
            <person name="Schuster S.C."/>
            <person name="Wang J."/>
            <person name="Li S."/>
            <person name="Huang X."/>
            <person name="Cai T."/>
            <person name="Yu Z."/>
            <person name="Luo J."/>
            <person name="Zhao J."/>
            <person name="Bryant D.A."/>
        </authorList>
    </citation>
    <scope>NUCLEOTIDE SEQUENCE [LARGE SCALE GENOMIC DNA]</scope>
    <source>
        <strain>ATCC 27264 / PCC 7002 / PR-6</strain>
    </source>
</reference>
<protein>
    <recommendedName>
        <fullName evidence="1">Photosystem II protein D1 1</fullName>
        <shortName evidence="1">PSII D1 protein 1</shortName>
        <ecNumber evidence="1">1.10.3.9</ecNumber>
    </recommendedName>
    <alternativeName>
        <fullName evidence="1">Photosystem II Q(B) protein 1</fullName>
    </alternativeName>
</protein>
<sequence length="360" mass="39711">MTTTLQQRGSASLWEKFCQWITSTENRIYVGWFGVLMIPTLLTATTCFIIAFIAAPPVDIDGIREPVAGSLLYGNNIISGAVVPSSNAIGLHFYPIWEAASLDEWLYNGGPYQLVIFHFLIGVFCYMGREWELSYRLGMRPWICVAFSAPVAAATAVFLIYPIGQGSFSDGMPLGISGTFNFMIVFQAEHNILMHPFHMLGVAGVFGGSLFSAMHGSLVTSSLVRETTETESQNYGYKFGQEEETYNIVAAHGYFGRLIFQYASFNNSRSLHFFLGAWPVVGIWFTALGVSTMAFNLNGFNFNQSILDSQGRVINTWADILNRANLGFEVMHERNAHNFPLDLAAGEQAPVALQAPAING</sequence>
<evidence type="ECO:0000255" key="1">
    <source>
        <dbReference type="HAMAP-Rule" id="MF_01379"/>
    </source>
</evidence>
<evidence type="ECO:0000305" key="2"/>
<comment type="function">
    <text evidence="1">Photosystem II (PSII) is a light-driven water:plastoquinone oxidoreductase that uses light energy to abstract electrons from H(2)O, generating O(2) and a proton gradient subsequently used for ATP formation. It consists of a core antenna complex that captures photons, and an electron transfer chain that converts photonic excitation into a charge separation. The D1/D2 (PsbA/PsbD) reaction center heterodimer binds P680, the primary electron donor of PSII as well as several subsequent electron acceptors.</text>
</comment>
<comment type="catalytic activity">
    <reaction evidence="1">
        <text>2 a plastoquinone + 4 hnu + 2 H2O = 2 a plastoquinol + O2</text>
        <dbReference type="Rhea" id="RHEA:36359"/>
        <dbReference type="Rhea" id="RHEA-COMP:9561"/>
        <dbReference type="Rhea" id="RHEA-COMP:9562"/>
        <dbReference type="ChEBI" id="CHEBI:15377"/>
        <dbReference type="ChEBI" id="CHEBI:15379"/>
        <dbReference type="ChEBI" id="CHEBI:17757"/>
        <dbReference type="ChEBI" id="CHEBI:30212"/>
        <dbReference type="ChEBI" id="CHEBI:62192"/>
        <dbReference type="EC" id="1.10.3.9"/>
    </reaction>
</comment>
<comment type="cofactor">
    <text evidence="1">The D1/D2 heterodimer binds P680, chlorophylls that are the primary electron donor of PSII, and subsequent electron acceptors. It shares a non-heme iron and each subunit binds pheophytin, quinone, additional chlorophylls, carotenoids and lipids. D1 provides most of the ligands for the Mn4-Ca-O5 cluster of the oxygen-evolving complex (OEC). There is also a Cl(-1) ion associated with D1 and D2, which is required for oxygen evolution. The PSII complex binds additional chlorophylls, carotenoids and specific lipids.</text>
</comment>
<comment type="subunit">
    <text evidence="1">PSII is composed of 1 copy each of membrane proteins PsbA, PsbB, PsbC, PsbD, PsbE, PsbF, PsbH, PsbI, PsbJ, PsbK, PsbL, PsbM, PsbT, PsbX, PsbY, PsbZ, Psb30/Ycf12, peripheral proteins PsbO, CyanoQ (PsbQ), PsbU, PsbV and a large number of cofactors. It forms dimeric complexes.</text>
</comment>
<comment type="subcellular location">
    <subcellularLocation>
        <location evidence="1">Cellular thylakoid membrane</location>
        <topology evidence="1">Multi-pass membrane protein</topology>
    </subcellularLocation>
</comment>
<comment type="PTM">
    <text evidence="1">Tyr-161 forms a radical intermediate that is referred to as redox-active TyrZ, YZ or Y-Z.</text>
</comment>
<comment type="PTM">
    <text evidence="1">C-terminally processed by CtpA; processing is essential to allow assembly of the oxygen-evolving complex and thus photosynthetic growth.</text>
</comment>
<comment type="miscellaneous">
    <text evidence="1">Cyanobacteria usually contain more than 2 copies of the psbA gene.</text>
</comment>
<comment type="miscellaneous">
    <text evidence="1">2 of the reaction center chlorophylls (ChlD1 and ChlD2) are entirely coordinated by water.</text>
</comment>
<comment type="miscellaneous">
    <text evidence="1">Herbicides such as atrazine, BNT, diuron or ioxynil bind in the Q(B) binding site and block subsequent electron transfer.</text>
</comment>
<comment type="similarity">
    <text evidence="1">Belongs to the reaction center PufL/M/PsbA/D family.</text>
</comment>
<comment type="sequence caution" evidence="2">
    <conflict type="erroneous initiation">
        <sequence resource="EMBL-CDS" id="ACA98171"/>
    </conflict>
    <text>Extended N-terminus.</text>
</comment>
<gene>
    <name evidence="1 2" type="primary">psbA1</name>
    <name type="ordered locus">SYNPCC7002_A0157</name>
</gene>
<keyword id="KW-0106">Calcium</keyword>
<keyword id="KW-0148">Chlorophyll</keyword>
<keyword id="KW-0157">Chromophore</keyword>
<keyword id="KW-0249">Electron transport</keyword>
<keyword id="KW-0359">Herbicide resistance</keyword>
<keyword id="KW-0408">Iron</keyword>
<keyword id="KW-0460">Magnesium</keyword>
<keyword id="KW-0464">Manganese</keyword>
<keyword id="KW-0472">Membrane</keyword>
<keyword id="KW-0479">Metal-binding</keyword>
<keyword id="KW-0560">Oxidoreductase</keyword>
<keyword id="KW-0602">Photosynthesis</keyword>
<keyword id="KW-0604">Photosystem II</keyword>
<keyword id="KW-1185">Reference proteome</keyword>
<keyword id="KW-0793">Thylakoid</keyword>
<keyword id="KW-0812">Transmembrane</keyword>
<keyword id="KW-1133">Transmembrane helix</keyword>
<keyword id="KW-0813">Transport</keyword>
<dbReference type="EC" id="1.10.3.9" evidence="1"/>
<dbReference type="EMBL" id="CP000951">
    <property type="protein sequence ID" value="ACA98171.1"/>
    <property type="status" value="ALT_INIT"/>
    <property type="molecule type" value="Genomic_DNA"/>
</dbReference>
<dbReference type="SMR" id="B1XM24"/>
<dbReference type="KEGG" id="syp:SYNPCC7002_A0157"/>
<dbReference type="HOGENOM" id="CLU_054206_1_0_3"/>
<dbReference type="Proteomes" id="UP000001688">
    <property type="component" value="Chromosome"/>
</dbReference>
<dbReference type="GO" id="GO:0009523">
    <property type="term" value="C:photosystem II"/>
    <property type="evidence" value="ECO:0007669"/>
    <property type="project" value="UniProtKB-KW"/>
</dbReference>
<dbReference type="GO" id="GO:0031676">
    <property type="term" value="C:plasma membrane-derived thylakoid membrane"/>
    <property type="evidence" value="ECO:0007669"/>
    <property type="project" value="UniProtKB-SubCell"/>
</dbReference>
<dbReference type="GO" id="GO:0016168">
    <property type="term" value="F:chlorophyll binding"/>
    <property type="evidence" value="ECO:0007669"/>
    <property type="project" value="UniProtKB-UniRule"/>
</dbReference>
<dbReference type="GO" id="GO:0045156">
    <property type="term" value="F:electron transporter, transferring electrons within the cyclic electron transport pathway of photosynthesis activity"/>
    <property type="evidence" value="ECO:0007669"/>
    <property type="project" value="InterPro"/>
</dbReference>
<dbReference type="GO" id="GO:0005506">
    <property type="term" value="F:iron ion binding"/>
    <property type="evidence" value="ECO:0007669"/>
    <property type="project" value="UniProtKB-UniRule"/>
</dbReference>
<dbReference type="GO" id="GO:0016682">
    <property type="term" value="F:oxidoreductase activity, acting on diphenols and related substances as donors, oxygen as acceptor"/>
    <property type="evidence" value="ECO:0007669"/>
    <property type="project" value="UniProtKB-UniRule"/>
</dbReference>
<dbReference type="GO" id="GO:0010242">
    <property type="term" value="F:oxygen evolving activity"/>
    <property type="evidence" value="ECO:0007669"/>
    <property type="project" value="UniProtKB-EC"/>
</dbReference>
<dbReference type="GO" id="GO:0009772">
    <property type="term" value="P:photosynthetic electron transport in photosystem II"/>
    <property type="evidence" value="ECO:0007669"/>
    <property type="project" value="InterPro"/>
</dbReference>
<dbReference type="GO" id="GO:0009635">
    <property type="term" value="P:response to herbicide"/>
    <property type="evidence" value="ECO:0007669"/>
    <property type="project" value="UniProtKB-KW"/>
</dbReference>
<dbReference type="CDD" id="cd09289">
    <property type="entry name" value="Photosystem-II_D1"/>
    <property type="match status" value="1"/>
</dbReference>
<dbReference type="FunFam" id="1.20.85.10:FF:000002">
    <property type="entry name" value="Photosystem II protein D1"/>
    <property type="match status" value="1"/>
</dbReference>
<dbReference type="Gene3D" id="1.20.85.10">
    <property type="entry name" value="Photosystem II protein D1-like"/>
    <property type="match status" value="1"/>
</dbReference>
<dbReference type="HAMAP" id="MF_01379">
    <property type="entry name" value="PSII_PsbA_D1"/>
    <property type="match status" value="1"/>
</dbReference>
<dbReference type="InterPro" id="IPR055266">
    <property type="entry name" value="D1/D2"/>
</dbReference>
<dbReference type="InterPro" id="IPR036854">
    <property type="entry name" value="Photo_II_D1/D2_sf"/>
</dbReference>
<dbReference type="InterPro" id="IPR000484">
    <property type="entry name" value="Photo_RC_L/M"/>
</dbReference>
<dbReference type="InterPro" id="IPR055265">
    <property type="entry name" value="Photo_RC_L/M_CS"/>
</dbReference>
<dbReference type="InterPro" id="IPR005867">
    <property type="entry name" value="PSII_D1"/>
</dbReference>
<dbReference type="NCBIfam" id="TIGR01151">
    <property type="entry name" value="psbA"/>
    <property type="match status" value="1"/>
</dbReference>
<dbReference type="PANTHER" id="PTHR33149:SF12">
    <property type="entry name" value="PHOTOSYSTEM II D2 PROTEIN"/>
    <property type="match status" value="1"/>
</dbReference>
<dbReference type="PANTHER" id="PTHR33149">
    <property type="entry name" value="PHOTOSYSTEM II PROTEIN D1"/>
    <property type="match status" value="1"/>
</dbReference>
<dbReference type="Pfam" id="PF00124">
    <property type="entry name" value="Photo_RC"/>
    <property type="match status" value="1"/>
</dbReference>
<dbReference type="PRINTS" id="PR00256">
    <property type="entry name" value="REACTNCENTRE"/>
</dbReference>
<dbReference type="SUPFAM" id="SSF81483">
    <property type="entry name" value="Bacterial photosystem II reaction centre, L and M subunits"/>
    <property type="match status" value="1"/>
</dbReference>
<dbReference type="PROSITE" id="PS00244">
    <property type="entry name" value="REACTION_CENTER"/>
    <property type="match status" value="1"/>
</dbReference>
<accession>B1XM24</accession>
<organism>
    <name type="scientific">Picosynechococcus sp. (strain ATCC 27264 / PCC 7002 / PR-6)</name>
    <name type="common">Agmenellum quadruplicatum</name>
    <dbReference type="NCBI Taxonomy" id="32049"/>
    <lineage>
        <taxon>Bacteria</taxon>
        <taxon>Bacillati</taxon>
        <taxon>Cyanobacteriota</taxon>
        <taxon>Cyanophyceae</taxon>
        <taxon>Oscillatoriophycideae</taxon>
        <taxon>Chroococcales</taxon>
        <taxon>Geminocystaceae</taxon>
        <taxon>Picosynechococcus</taxon>
    </lineage>
</organism>
<name>PSBA1_PICP2</name>